<gene>
    <name type="ordered locus">19.2</name>
</gene>
<proteinExistence type="predicted"/>
<keyword id="KW-1185">Reference proteome</keyword>
<organismHost>
    <name type="scientific">Escherichia coli</name>
    <dbReference type="NCBI Taxonomy" id="562"/>
</organismHost>
<protein>
    <recommendedName>
        <fullName>Protein 19.2</fullName>
    </recommendedName>
    <alternativeName>
        <fullName>Gene product 19.2</fullName>
        <shortName>Gp19.2</shortName>
    </alternativeName>
</protein>
<dbReference type="EMBL" id="V01146">
    <property type="protein sequence ID" value="CAA24441.1"/>
    <property type="molecule type" value="Genomic_DNA"/>
</dbReference>
<dbReference type="PIR" id="S42339">
    <property type="entry name" value="W9BPB7"/>
</dbReference>
<dbReference type="RefSeq" id="NP_042011.1">
    <property type="nucleotide sequence ID" value="NC_001604.1"/>
</dbReference>
<dbReference type="KEGG" id="vg:1261064"/>
<dbReference type="OrthoDB" id="25669at10239"/>
<dbReference type="Proteomes" id="UP000000840">
    <property type="component" value="Genome"/>
</dbReference>
<dbReference type="InterPro" id="IPR020148">
    <property type="entry name" value="DUF5477"/>
</dbReference>
<dbReference type="Pfam" id="PF17571">
    <property type="entry name" value="DUF5477"/>
    <property type="match status" value="1"/>
</dbReference>
<accession>P03789</accession>
<name>Y192_BPT7</name>
<reference key="1">
    <citation type="journal article" date="1983" name="J. Mol. Biol.">
        <title>Complete nucleotide sequence of bacteriophage T7 DNA and the locations of T7 genetic elements.</title>
        <authorList>
            <person name="Dunn J.J."/>
            <person name="Studier F.W."/>
        </authorList>
    </citation>
    <scope>NUCLEOTIDE SEQUENCE [LARGE SCALE GENOMIC DNA]</scope>
</reference>
<sequence>MGTQPLSGLLCTQGHVKRTSITHSVLLLCYALSTMRTLRHLLGLQQTQCALTVMTCASVSWNTVRLALRYSSCLTLTLVMPRSTR</sequence>
<feature type="chain" id="PRO_0000106543" description="Protein 19.2">
    <location>
        <begin position="1"/>
        <end position="85"/>
    </location>
</feature>
<organism>
    <name type="scientific">Escherichia phage T7</name>
    <name type="common">Bacteriophage T7</name>
    <dbReference type="NCBI Taxonomy" id="10760"/>
    <lineage>
        <taxon>Viruses</taxon>
        <taxon>Duplodnaviria</taxon>
        <taxon>Heunggongvirae</taxon>
        <taxon>Uroviricota</taxon>
        <taxon>Caudoviricetes</taxon>
        <taxon>Autographiviridae</taxon>
        <taxon>Studiervirinae</taxon>
        <taxon>Teseptimavirus</taxon>
        <taxon>Teseptimavirus T7</taxon>
    </lineage>
</organism>